<comment type="function">
    <text evidence="1">Plays a role in cell envelope biogenesis, maintenance of cell envelope integrity and membrane homeostasis.</text>
</comment>
<comment type="subcellular location">
    <subcellularLocation>
        <location evidence="1">Cell inner membrane</location>
        <topology evidence="1">Multi-pass membrane protein</topology>
    </subcellularLocation>
</comment>
<comment type="similarity">
    <text evidence="1">Belongs to the YciB family.</text>
</comment>
<reference key="1">
    <citation type="submission" date="2007-09" db="EMBL/GenBank/DDBJ databases">
        <title>Complete genome sequence of Rickettsia akari.</title>
        <authorList>
            <person name="Madan A."/>
            <person name="Fahey J."/>
            <person name="Helton E."/>
            <person name="Ketteman M."/>
            <person name="Madan A."/>
            <person name="Rodrigues S."/>
            <person name="Sanchez A."/>
            <person name="Whiting M."/>
            <person name="Dasch G."/>
            <person name="Eremeeva M."/>
        </authorList>
    </citation>
    <scope>NUCLEOTIDE SEQUENCE [LARGE SCALE GENOMIC DNA]</scope>
    <source>
        <strain>Hartford</strain>
    </source>
</reference>
<accession>A8GNA3</accession>
<dbReference type="EMBL" id="CP000847">
    <property type="protein sequence ID" value="ABV74878.1"/>
    <property type="molecule type" value="Genomic_DNA"/>
</dbReference>
<dbReference type="RefSeq" id="WP_012149511.1">
    <property type="nucleotide sequence ID" value="NC_009881.1"/>
</dbReference>
<dbReference type="SMR" id="A8GNA3"/>
<dbReference type="STRING" id="293614.A1C_02940"/>
<dbReference type="KEGG" id="rak:A1C_02940"/>
<dbReference type="eggNOG" id="COG2917">
    <property type="taxonomic scope" value="Bacteria"/>
</dbReference>
<dbReference type="HOGENOM" id="CLU_089554_1_1_5"/>
<dbReference type="Proteomes" id="UP000006830">
    <property type="component" value="Chromosome"/>
</dbReference>
<dbReference type="GO" id="GO:0005886">
    <property type="term" value="C:plasma membrane"/>
    <property type="evidence" value="ECO:0007669"/>
    <property type="project" value="UniProtKB-SubCell"/>
</dbReference>
<dbReference type="HAMAP" id="MF_00189">
    <property type="entry name" value="YciB"/>
    <property type="match status" value="1"/>
</dbReference>
<dbReference type="InterPro" id="IPR006008">
    <property type="entry name" value="YciB"/>
</dbReference>
<dbReference type="NCBIfam" id="TIGR00997">
    <property type="entry name" value="ispZ"/>
    <property type="match status" value="1"/>
</dbReference>
<dbReference type="NCBIfam" id="NF001323">
    <property type="entry name" value="PRK00259.1-1"/>
    <property type="match status" value="1"/>
</dbReference>
<dbReference type="PANTHER" id="PTHR36917:SF1">
    <property type="entry name" value="INNER MEMBRANE-SPANNING PROTEIN YCIB"/>
    <property type="match status" value="1"/>
</dbReference>
<dbReference type="PANTHER" id="PTHR36917">
    <property type="entry name" value="INTRACELLULAR SEPTATION PROTEIN A-RELATED"/>
    <property type="match status" value="1"/>
</dbReference>
<dbReference type="Pfam" id="PF04279">
    <property type="entry name" value="IspA"/>
    <property type="match status" value="1"/>
</dbReference>
<sequence>MLKLLSEIGPVIAFFAGFFYGGGIQNATLYMLITSVICITLCYIIDKKVSKLSIISTTVLLVSGSITLISGDSMYIKIKPTILYVIFGIIFLMSGIRKTPFIKYALESIVRLKEESWITLSYRTAAFFFFMAVVNEIVWRNFSDETWVKFKVFGIIPITFIFIVLQLPLLLKNKLPDSKI</sequence>
<evidence type="ECO:0000255" key="1">
    <source>
        <dbReference type="HAMAP-Rule" id="MF_00189"/>
    </source>
</evidence>
<keyword id="KW-0997">Cell inner membrane</keyword>
<keyword id="KW-1003">Cell membrane</keyword>
<keyword id="KW-0472">Membrane</keyword>
<keyword id="KW-0812">Transmembrane</keyword>
<keyword id="KW-1133">Transmembrane helix</keyword>
<protein>
    <recommendedName>
        <fullName evidence="1">Inner membrane-spanning protein YciB</fullName>
    </recommendedName>
</protein>
<proteinExistence type="inferred from homology"/>
<feature type="chain" id="PRO_1000021050" description="Inner membrane-spanning protein YciB">
    <location>
        <begin position="1"/>
        <end position="180"/>
    </location>
</feature>
<feature type="transmembrane region" description="Helical" evidence="1">
    <location>
        <begin position="25"/>
        <end position="45"/>
    </location>
</feature>
<feature type="transmembrane region" description="Helical" evidence="1">
    <location>
        <begin position="49"/>
        <end position="69"/>
    </location>
</feature>
<feature type="transmembrane region" description="Helical" evidence="1">
    <location>
        <begin position="76"/>
        <end position="96"/>
    </location>
</feature>
<feature type="transmembrane region" description="Helical" evidence="1">
    <location>
        <begin position="118"/>
        <end position="138"/>
    </location>
</feature>
<feature type="transmembrane region" description="Helical" evidence="1">
    <location>
        <begin position="150"/>
        <end position="170"/>
    </location>
</feature>
<gene>
    <name evidence="1" type="primary">yciB</name>
    <name type="ordered locus">A1C_02940</name>
</gene>
<name>YCIB_RICAH</name>
<organism>
    <name type="scientific">Rickettsia akari (strain Hartford)</name>
    <dbReference type="NCBI Taxonomy" id="293614"/>
    <lineage>
        <taxon>Bacteria</taxon>
        <taxon>Pseudomonadati</taxon>
        <taxon>Pseudomonadota</taxon>
        <taxon>Alphaproteobacteria</taxon>
        <taxon>Rickettsiales</taxon>
        <taxon>Rickettsiaceae</taxon>
        <taxon>Rickettsieae</taxon>
        <taxon>Rickettsia</taxon>
        <taxon>spotted fever group</taxon>
    </lineage>
</organism>